<evidence type="ECO:0000250" key="1"/>
<evidence type="ECO:0000250" key="2">
    <source>
        <dbReference type="UniProtKB" id="P25208"/>
    </source>
</evidence>
<evidence type="ECO:0000256" key="3">
    <source>
        <dbReference type="SAM" id="MobiDB-lite"/>
    </source>
</evidence>
<evidence type="ECO:0000305" key="4"/>
<dbReference type="EMBL" id="M55045">
    <property type="protein sequence ID" value="AAA40887.1"/>
    <property type="molecule type" value="mRNA"/>
</dbReference>
<dbReference type="EMBL" id="BC089791">
    <property type="protein sequence ID" value="AAH89791.1"/>
    <property type="molecule type" value="mRNA"/>
</dbReference>
<dbReference type="PIR" id="A23692">
    <property type="entry name" value="A23692"/>
</dbReference>
<dbReference type="RefSeq" id="NP_113741.1">
    <property type="nucleotide sequence ID" value="NM_031553.2"/>
</dbReference>
<dbReference type="RefSeq" id="XP_006241258.1">
    <property type="nucleotide sequence ID" value="XM_006241196.3"/>
</dbReference>
<dbReference type="RefSeq" id="XP_038934389.1">
    <property type="nucleotide sequence ID" value="XM_039078461.2"/>
</dbReference>
<dbReference type="SMR" id="P63140"/>
<dbReference type="DIP" id="DIP-2660N"/>
<dbReference type="FunCoup" id="P63140">
    <property type="interactions" value="3434"/>
</dbReference>
<dbReference type="STRING" id="10116.ENSRNOP00000061405"/>
<dbReference type="PhosphoSitePlus" id="P63140"/>
<dbReference type="PaxDb" id="10116-ENSRNOP00000061405"/>
<dbReference type="Ensembl" id="ENSRNOT00000066143.3">
    <property type="protein sequence ID" value="ENSRNOP00000061405.1"/>
    <property type="gene ID" value="ENSRNOG00000010309.7"/>
</dbReference>
<dbReference type="GeneID" id="25336"/>
<dbReference type="KEGG" id="rno:25336"/>
<dbReference type="UCSC" id="RGD:3172">
    <property type="organism name" value="rat"/>
</dbReference>
<dbReference type="AGR" id="RGD:3172"/>
<dbReference type="CTD" id="4801"/>
<dbReference type="RGD" id="3172">
    <property type="gene designation" value="Nfyb"/>
</dbReference>
<dbReference type="eggNOG" id="KOG0869">
    <property type="taxonomic scope" value="Eukaryota"/>
</dbReference>
<dbReference type="GeneTree" id="ENSGT00940000154917"/>
<dbReference type="HOGENOM" id="CLU_066247_9_2_1"/>
<dbReference type="InParanoid" id="P63140"/>
<dbReference type="OrthoDB" id="13288at9989"/>
<dbReference type="PhylomeDB" id="P63140"/>
<dbReference type="TreeFam" id="TF314521"/>
<dbReference type="PRO" id="PR:P63140"/>
<dbReference type="Proteomes" id="UP000002494">
    <property type="component" value="Chromosome 7"/>
</dbReference>
<dbReference type="Bgee" id="ENSRNOG00000010309">
    <property type="expression patterns" value="Expressed in thymus and 19 other cell types or tissues"/>
</dbReference>
<dbReference type="ExpressionAtlas" id="P63140">
    <property type="expression patterns" value="baseline and differential"/>
</dbReference>
<dbReference type="GO" id="GO:0016602">
    <property type="term" value="C:CCAAT-binding factor complex"/>
    <property type="evidence" value="ECO:0000314"/>
    <property type="project" value="RGD"/>
</dbReference>
<dbReference type="GO" id="GO:0005654">
    <property type="term" value="C:nucleoplasm"/>
    <property type="evidence" value="ECO:0000304"/>
    <property type="project" value="Reactome"/>
</dbReference>
<dbReference type="GO" id="GO:0005634">
    <property type="term" value="C:nucleus"/>
    <property type="evidence" value="ECO:0000266"/>
    <property type="project" value="RGD"/>
</dbReference>
<dbReference type="GO" id="GO:0032993">
    <property type="term" value="C:protein-DNA complex"/>
    <property type="evidence" value="ECO:0000266"/>
    <property type="project" value="RGD"/>
</dbReference>
<dbReference type="GO" id="GO:0090575">
    <property type="term" value="C:RNA polymerase II transcription regulator complex"/>
    <property type="evidence" value="ECO:0000266"/>
    <property type="project" value="RGD"/>
</dbReference>
<dbReference type="GO" id="GO:0003677">
    <property type="term" value="F:DNA binding"/>
    <property type="evidence" value="ECO:0000266"/>
    <property type="project" value="RGD"/>
</dbReference>
<dbReference type="GO" id="GO:0001228">
    <property type="term" value="F:DNA-binding transcription activator activity, RNA polymerase II-specific"/>
    <property type="evidence" value="ECO:0000266"/>
    <property type="project" value="RGD"/>
</dbReference>
<dbReference type="GO" id="GO:0003700">
    <property type="term" value="F:DNA-binding transcription factor activity"/>
    <property type="evidence" value="ECO:0000266"/>
    <property type="project" value="RGD"/>
</dbReference>
<dbReference type="GO" id="GO:0000981">
    <property type="term" value="F:DNA-binding transcription factor activity, RNA polymerase II-specific"/>
    <property type="evidence" value="ECO:0000318"/>
    <property type="project" value="GO_Central"/>
</dbReference>
<dbReference type="GO" id="GO:0140297">
    <property type="term" value="F:DNA-binding transcription factor binding"/>
    <property type="evidence" value="ECO:0000266"/>
    <property type="project" value="RGD"/>
</dbReference>
<dbReference type="GO" id="GO:0046982">
    <property type="term" value="F:protein heterodimerization activity"/>
    <property type="evidence" value="ECO:0007669"/>
    <property type="project" value="InterPro"/>
</dbReference>
<dbReference type="GO" id="GO:0044877">
    <property type="term" value="F:protein-containing complex binding"/>
    <property type="evidence" value="ECO:0000314"/>
    <property type="project" value="RGD"/>
</dbReference>
<dbReference type="GO" id="GO:0000978">
    <property type="term" value="F:RNA polymerase II cis-regulatory region sequence-specific DNA binding"/>
    <property type="evidence" value="ECO:0000266"/>
    <property type="project" value="RGD"/>
</dbReference>
<dbReference type="GO" id="GO:0043565">
    <property type="term" value="F:sequence-specific DNA binding"/>
    <property type="evidence" value="ECO:0000266"/>
    <property type="project" value="RGD"/>
</dbReference>
<dbReference type="GO" id="GO:1990830">
    <property type="term" value="P:cellular response to leukemia inhibitory factor"/>
    <property type="evidence" value="ECO:0000266"/>
    <property type="project" value="RGD"/>
</dbReference>
<dbReference type="GO" id="GO:0045893">
    <property type="term" value="P:positive regulation of DNA-templated transcription"/>
    <property type="evidence" value="ECO:0000266"/>
    <property type="project" value="RGD"/>
</dbReference>
<dbReference type="GO" id="GO:0045944">
    <property type="term" value="P:positive regulation of transcription by RNA polymerase II"/>
    <property type="evidence" value="ECO:0000266"/>
    <property type="project" value="RGD"/>
</dbReference>
<dbReference type="GO" id="GO:0006355">
    <property type="term" value="P:regulation of DNA-templated transcription"/>
    <property type="evidence" value="ECO:0000266"/>
    <property type="project" value="RGD"/>
</dbReference>
<dbReference type="GO" id="GO:0006357">
    <property type="term" value="P:regulation of transcription by RNA polymerase II"/>
    <property type="evidence" value="ECO:0000318"/>
    <property type="project" value="GO_Central"/>
</dbReference>
<dbReference type="GO" id="GO:0006366">
    <property type="term" value="P:transcription by RNA polymerase II"/>
    <property type="evidence" value="ECO:0000305"/>
    <property type="project" value="RGD"/>
</dbReference>
<dbReference type="CDD" id="cd22907">
    <property type="entry name" value="HFD_NFYB"/>
    <property type="match status" value="1"/>
</dbReference>
<dbReference type="FunFam" id="1.10.20.10:FF:000027">
    <property type="entry name" value="Nuclear transcription factor Y subunit beta"/>
    <property type="match status" value="1"/>
</dbReference>
<dbReference type="Gene3D" id="1.10.20.10">
    <property type="entry name" value="Histone, subunit A"/>
    <property type="match status" value="1"/>
</dbReference>
<dbReference type="InterPro" id="IPR003958">
    <property type="entry name" value="CBFA_NFYB_domain"/>
</dbReference>
<dbReference type="InterPro" id="IPR009072">
    <property type="entry name" value="Histone-fold"/>
</dbReference>
<dbReference type="InterPro" id="IPR027113">
    <property type="entry name" value="Transc_fact_NFYB/HAP3"/>
</dbReference>
<dbReference type="InterPro" id="IPR003956">
    <property type="entry name" value="Transcrpt_fac_NFYB/HAP3_CS"/>
</dbReference>
<dbReference type="PANTHER" id="PTHR11064">
    <property type="entry name" value="CCAAT-BINDING TRANSCRIPTION FACTOR-RELATED"/>
    <property type="match status" value="1"/>
</dbReference>
<dbReference type="PANTHER" id="PTHR11064:SF195">
    <property type="entry name" value="NUCLEAR TRANSCRIPTION FACTOR Y SUBUNIT BETA"/>
    <property type="match status" value="1"/>
</dbReference>
<dbReference type="Pfam" id="PF00808">
    <property type="entry name" value="CBFD_NFYB_HMF"/>
    <property type="match status" value="1"/>
</dbReference>
<dbReference type="PRINTS" id="PR00615">
    <property type="entry name" value="CCAATSUBUNTA"/>
</dbReference>
<dbReference type="SUPFAM" id="SSF47113">
    <property type="entry name" value="Histone-fold"/>
    <property type="match status" value="1"/>
</dbReference>
<dbReference type="PROSITE" id="PS00685">
    <property type="entry name" value="NFYB_HAP3"/>
    <property type="match status" value="1"/>
</dbReference>
<protein>
    <recommendedName>
        <fullName>Nuclear transcription factor Y subunit beta</fullName>
    </recommendedName>
    <alternativeName>
        <fullName>CAAT box DNA-binding protein subunit B</fullName>
    </alternativeName>
    <alternativeName>
        <fullName>CCAAT-binding transcription factor subunit B</fullName>
        <shortName>CBF-B</shortName>
    </alternativeName>
    <alternativeName>
        <fullName>Nuclear transcription factor Y subunit B</fullName>
        <shortName>NF-YB</shortName>
    </alternativeName>
</protein>
<keyword id="KW-0010">Activator</keyword>
<keyword id="KW-0903">Direct protein sequencing</keyword>
<keyword id="KW-0238">DNA-binding</keyword>
<keyword id="KW-1017">Isopeptide bond</keyword>
<keyword id="KW-0539">Nucleus</keyword>
<keyword id="KW-1185">Reference proteome</keyword>
<keyword id="KW-0804">Transcription</keyword>
<keyword id="KW-0805">Transcription regulation</keyword>
<keyword id="KW-0832">Ubl conjugation</keyword>
<reference key="1">
    <citation type="journal article" date="1990" name="J. Biol. Chem.">
        <title>Purification and molecular cloning of the 'A' chain of a rat heteromeric CCAAT-binding protein. Sequence identity with the yeast HAP3 transcription factor.</title>
        <authorList>
            <person name="Vuorio T."/>
            <person name="Maity S.N."/>
            <person name="de Crombrugghe B."/>
        </authorList>
    </citation>
    <scope>NUCLEOTIDE SEQUENCE [MRNA]</scope>
    <scope>PROTEIN SEQUENCE OF 78-97; 82-103; 136-140 AND 141-150</scope>
</reference>
<reference key="2">
    <citation type="journal article" date="2004" name="Genome Res.">
        <title>The status, quality, and expansion of the NIH full-length cDNA project: the Mammalian Gene Collection (MGC).</title>
        <authorList>
            <consortium name="The MGC Project Team"/>
        </authorList>
    </citation>
    <scope>NUCLEOTIDE SEQUENCE [LARGE SCALE MRNA]</scope>
    <source>
        <tissue>Thymus</tissue>
    </source>
</reference>
<gene>
    <name type="primary">Nfyb</name>
</gene>
<organism>
    <name type="scientific">Rattus norvegicus</name>
    <name type="common">Rat</name>
    <dbReference type="NCBI Taxonomy" id="10116"/>
    <lineage>
        <taxon>Eukaryota</taxon>
        <taxon>Metazoa</taxon>
        <taxon>Chordata</taxon>
        <taxon>Craniata</taxon>
        <taxon>Vertebrata</taxon>
        <taxon>Euteleostomi</taxon>
        <taxon>Mammalia</taxon>
        <taxon>Eutheria</taxon>
        <taxon>Euarchontoglires</taxon>
        <taxon>Glires</taxon>
        <taxon>Rodentia</taxon>
        <taxon>Myomorpha</taxon>
        <taxon>Muroidea</taxon>
        <taxon>Muridae</taxon>
        <taxon>Murinae</taxon>
        <taxon>Rattus</taxon>
    </lineage>
</organism>
<name>NFYB_RAT</name>
<accession>P63140</accession>
<accession>P22569</accession>
<accession>Q5FVT0</accession>
<comment type="function">
    <text>Component of the sequence-specific heterotrimeric transcription factor (NF-Y) which specifically recognizes a 5'-CCAAT-3' box motif found in the promoters of its target genes. NF-Y can function as both an activator and a repressor, depending on its interacting cofactors.</text>
</comment>
<comment type="subunit">
    <text evidence="1">Heterotrimeric transcription factor composed of three components, NF-YA, NF-YB and NF-YC. NF-YB and NF-YC must interact and dimerize for NF-YA association and DNA binding. Interacts with C1QBP (By similarity).</text>
</comment>
<comment type="subcellular location">
    <subcellularLocation>
        <location>Nucleus</location>
    </subcellularLocation>
</comment>
<comment type="domain">
    <text>Can be divided into 3 domains: the weakly conserved A domain, the highly conserved B domain thought to be involved in subunit interaction and DNA binding, and the Glu-rich C domain.</text>
</comment>
<comment type="PTM">
    <text evidence="1">Monoubiquitination at Lys-140 plays an important role in transcriptional activation by allowing the deposition of histone H3 methylations as well as histone H2B monoubiquitination at 'Lys-121'.</text>
</comment>
<comment type="similarity">
    <text evidence="4">Belongs to the NFYB/HAP3 subunit family.</text>
</comment>
<feature type="chain" id="PRO_0000204611" description="Nuclear transcription factor Y subunit beta">
    <location>
        <begin position="1"/>
        <end position="207"/>
    </location>
</feature>
<feature type="DNA-binding region" evidence="1">
    <location>
        <begin position="59"/>
        <end position="65"/>
    </location>
</feature>
<feature type="region of interest" description="A domain">
    <location>
        <begin position="1"/>
        <end position="52"/>
    </location>
</feature>
<feature type="region of interest" description="Disordered" evidence="3">
    <location>
        <begin position="27"/>
        <end position="52"/>
    </location>
</feature>
<feature type="region of interest" description="B domain">
    <location>
        <begin position="53"/>
        <end position="142"/>
    </location>
</feature>
<feature type="region of interest" description="Subunit association domain (SAD)" evidence="1">
    <location>
        <begin position="86"/>
        <end position="97"/>
    </location>
</feature>
<feature type="region of interest" description="C domain">
    <location>
        <begin position="143"/>
        <end position="207"/>
    </location>
</feature>
<feature type="compositionally biased region" description="Basic and acidic residues" evidence="3">
    <location>
        <begin position="39"/>
        <end position="52"/>
    </location>
</feature>
<feature type="cross-link" description="Glycyl lysine isopeptide (Lys-Gly) (interchain with G-Cter in ubiquitin)" evidence="2">
    <location>
        <position position="140"/>
    </location>
</feature>
<proteinExistence type="evidence at protein level"/>
<sequence>MTMDGDSSTTDASQLGISADYIGGSHYVIQPHDDTEDSMNDHEDTNGSKESFREQDIYLPIANVARIMKNAIPQTGKIAKDAKECVQECVSEFISFITSEASERCHQEKRKTINGEDILFAMSTLGFDSYVEPLKLYLQKFREAMKGEKGIGGAVSATDGLSEELTEEAFTNQLPAGLITADGQQQNVMVYTTSYQQISGVQQIQFS</sequence>